<evidence type="ECO:0000255" key="1">
    <source>
        <dbReference type="HAMAP-Rule" id="MF_00251"/>
    </source>
</evidence>
<evidence type="ECO:0000305" key="2"/>
<comment type="similarity">
    <text evidence="1">Belongs to the bacterial ribosomal protein bL36 family.</text>
</comment>
<comment type="sequence caution" evidence="2">
    <conflict type="erroneous initiation">
        <sequence resource="EMBL-CDS" id="ABD44398"/>
    </conflict>
</comment>
<gene>
    <name evidence="1" type="primary">rpmJ</name>
    <name type="ordered locus">APH_0508</name>
</gene>
<dbReference type="EMBL" id="CP000235">
    <property type="protein sequence ID" value="ABD44398.1"/>
    <property type="status" value="ALT_INIT"/>
    <property type="molecule type" value="Genomic_DNA"/>
</dbReference>
<dbReference type="SMR" id="Q2GKJ8"/>
<dbReference type="STRING" id="212042.APH_0508"/>
<dbReference type="PaxDb" id="212042-APH_0508"/>
<dbReference type="EnsemblBacteria" id="ABD44398">
    <property type="protein sequence ID" value="ABD44398"/>
    <property type="gene ID" value="APH_0508"/>
</dbReference>
<dbReference type="KEGG" id="aph:APH_0508"/>
<dbReference type="eggNOG" id="COG0257">
    <property type="taxonomic scope" value="Bacteria"/>
</dbReference>
<dbReference type="HOGENOM" id="CLU_135723_3_2_5"/>
<dbReference type="Proteomes" id="UP000001943">
    <property type="component" value="Chromosome"/>
</dbReference>
<dbReference type="GO" id="GO:1990904">
    <property type="term" value="C:ribonucleoprotein complex"/>
    <property type="evidence" value="ECO:0007669"/>
    <property type="project" value="UniProtKB-KW"/>
</dbReference>
<dbReference type="GO" id="GO:0005840">
    <property type="term" value="C:ribosome"/>
    <property type="evidence" value="ECO:0007669"/>
    <property type="project" value="UniProtKB-KW"/>
</dbReference>
<dbReference type="GO" id="GO:0003735">
    <property type="term" value="F:structural constituent of ribosome"/>
    <property type="evidence" value="ECO:0007669"/>
    <property type="project" value="InterPro"/>
</dbReference>
<dbReference type="GO" id="GO:0006412">
    <property type="term" value="P:translation"/>
    <property type="evidence" value="ECO:0007669"/>
    <property type="project" value="UniProtKB-UniRule"/>
</dbReference>
<dbReference type="HAMAP" id="MF_00251">
    <property type="entry name" value="Ribosomal_bL36"/>
    <property type="match status" value="1"/>
</dbReference>
<dbReference type="InterPro" id="IPR000473">
    <property type="entry name" value="Ribosomal_bL36"/>
</dbReference>
<dbReference type="InterPro" id="IPR035977">
    <property type="entry name" value="Ribosomal_bL36_sp"/>
</dbReference>
<dbReference type="InterPro" id="IPR047621">
    <property type="entry name" value="Ribosomal_L36_bact"/>
</dbReference>
<dbReference type="NCBIfam" id="NF002021">
    <property type="entry name" value="PRK00831.1"/>
    <property type="match status" value="1"/>
</dbReference>
<dbReference type="NCBIfam" id="TIGR01022">
    <property type="entry name" value="rpmJ_bact"/>
    <property type="match status" value="1"/>
</dbReference>
<dbReference type="PANTHER" id="PTHR47781">
    <property type="entry name" value="50S RIBOSOMAL PROTEIN L36 2"/>
    <property type="match status" value="1"/>
</dbReference>
<dbReference type="PANTHER" id="PTHR47781:SF1">
    <property type="entry name" value="LARGE RIBOSOMAL SUBUNIT PROTEIN BL36B"/>
    <property type="match status" value="1"/>
</dbReference>
<dbReference type="Pfam" id="PF00444">
    <property type="entry name" value="Ribosomal_L36"/>
    <property type="match status" value="1"/>
</dbReference>
<dbReference type="SUPFAM" id="SSF57840">
    <property type="entry name" value="Ribosomal protein L36"/>
    <property type="match status" value="1"/>
</dbReference>
<dbReference type="PROSITE" id="PS00828">
    <property type="entry name" value="RIBOSOMAL_L36"/>
    <property type="match status" value="1"/>
</dbReference>
<protein>
    <recommendedName>
        <fullName evidence="1">Large ribosomal subunit protein bL36</fullName>
    </recommendedName>
    <alternativeName>
        <fullName evidence="2">50S ribosomal protein L36</fullName>
    </alternativeName>
</protein>
<proteinExistence type="inferred from homology"/>
<accession>Q2GKJ8</accession>
<reference key="1">
    <citation type="journal article" date="2006" name="PLoS Genet.">
        <title>Comparative genomics of emerging human ehrlichiosis agents.</title>
        <authorList>
            <person name="Dunning Hotopp J.C."/>
            <person name="Lin M."/>
            <person name="Madupu R."/>
            <person name="Crabtree J."/>
            <person name="Angiuoli S.V."/>
            <person name="Eisen J.A."/>
            <person name="Seshadri R."/>
            <person name="Ren Q."/>
            <person name="Wu M."/>
            <person name="Utterback T.R."/>
            <person name="Smith S."/>
            <person name="Lewis M."/>
            <person name="Khouri H."/>
            <person name="Zhang C."/>
            <person name="Niu H."/>
            <person name="Lin Q."/>
            <person name="Ohashi N."/>
            <person name="Zhi N."/>
            <person name="Nelson W.C."/>
            <person name="Brinkac L.M."/>
            <person name="Dodson R.J."/>
            <person name="Rosovitz M.J."/>
            <person name="Sundaram J.P."/>
            <person name="Daugherty S.C."/>
            <person name="Davidsen T."/>
            <person name="Durkin A.S."/>
            <person name="Gwinn M.L."/>
            <person name="Haft D.H."/>
            <person name="Selengut J.D."/>
            <person name="Sullivan S.A."/>
            <person name="Zafar N."/>
            <person name="Zhou L."/>
            <person name="Benahmed F."/>
            <person name="Forberger H."/>
            <person name="Halpin R."/>
            <person name="Mulligan S."/>
            <person name="Robinson J."/>
            <person name="White O."/>
            <person name="Rikihisa Y."/>
            <person name="Tettelin H."/>
        </authorList>
    </citation>
    <scope>NUCLEOTIDE SEQUENCE [LARGE SCALE GENOMIC DNA]</scope>
    <source>
        <strain>HZ</strain>
    </source>
</reference>
<keyword id="KW-0687">Ribonucleoprotein</keyword>
<keyword id="KW-0689">Ribosomal protein</keyword>
<organism>
    <name type="scientific">Anaplasma phagocytophilum (strain HZ)</name>
    <dbReference type="NCBI Taxonomy" id="212042"/>
    <lineage>
        <taxon>Bacteria</taxon>
        <taxon>Pseudomonadati</taxon>
        <taxon>Pseudomonadota</taxon>
        <taxon>Alphaproteobacteria</taxon>
        <taxon>Rickettsiales</taxon>
        <taxon>Anaplasmataceae</taxon>
        <taxon>Anaplasma</taxon>
        <taxon>phagocytophilum group</taxon>
    </lineage>
</organism>
<name>RL36_ANAPZ</name>
<sequence length="42" mass="4984">MKVMGSLKSAKSRDRDCKIVRRKGRVYVINKKKPRFKARQGY</sequence>
<feature type="chain" id="PRO_0000344641" description="Large ribosomal subunit protein bL36">
    <location>
        <begin position="1"/>
        <end position="42"/>
    </location>
</feature>